<gene>
    <name type="primary">papK</name>
</gene>
<accession>P62532</accession>
<accession>P42190</accession>
<reference key="1">
    <citation type="journal article" date="1992" name="Mol. Microbiol.">
        <title>Horizontal gene transfer of the Escherichia coli pap and prs pili operons as a mechanism for the development of tissue-specific adhesive properties.</title>
        <authorList>
            <person name="Marklund B.-I."/>
            <person name="Tennent J.M."/>
            <person name="Garcia E."/>
            <person name="Hamers A."/>
            <person name="Baga M."/>
            <person name="Lindberg F."/>
            <person name="Gaastra W."/>
            <person name="Normark S."/>
        </authorList>
    </citation>
    <scope>NUCLEOTIDE SEQUENCE [GENOMIC DNA]</scope>
    <source>
        <strain>ATCC 700336 / J96 / UPEC</strain>
    </source>
</reference>
<reference key="2">
    <citation type="journal article" date="1993" name="EMBO J.">
        <title>Initiation of assembly and association of the structural elements of a bacterial pilus depend on two specialized tip proteins.</title>
        <authorList>
            <person name="Jacob-Dubuisson F."/>
            <person name="Heuser J."/>
            <person name="Dodson K."/>
            <person name="Normark S."/>
            <person name="Hultgren S."/>
        </authorList>
    </citation>
    <scope>FUNCTION</scope>
</reference>
<reference key="3">
    <citation type="journal article" date="1998" name="J. Struct. Biol.">
        <title>Pilus biogenesis via the chaperone/usher pathway: an integration of structure and function.</title>
        <authorList>
            <person name="Hung D.L."/>
            <person name="Hultgren S.J."/>
        </authorList>
    </citation>
    <scope>REVIEW</scope>
</reference>
<reference key="4">
    <citation type="journal article" date="1999" name="Science">
        <title>Structural basis of chaperone function and pilus biogenesis.</title>
        <authorList>
            <person name="Sauer F.G."/>
            <person name="Fuetterer K."/>
            <person name="Pinkner J.S."/>
            <person name="Dodson K.W."/>
            <person name="Hultgren S.J."/>
            <person name="Waksman G."/>
        </authorList>
    </citation>
    <scope>X-RAY CRYSTALLOGRAPHY (2.4 ANGSTROMS) OF THE PAPD-PAPK COMPLEX</scope>
</reference>
<organism>
    <name type="scientific">Escherichia coli</name>
    <dbReference type="NCBI Taxonomy" id="562"/>
    <lineage>
        <taxon>Bacteria</taxon>
        <taxon>Pseudomonadati</taxon>
        <taxon>Pseudomonadota</taxon>
        <taxon>Gammaproteobacteria</taxon>
        <taxon>Enterobacterales</taxon>
        <taxon>Enterobacteriaceae</taxon>
        <taxon>Escherichia</taxon>
    </lineage>
</organism>
<dbReference type="EMBL" id="X61239">
    <property type="protein sequence ID" value="CAA43567.1"/>
    <property type="molecule type" value="Genomic_DNA"/>
</dbReference>
<dbReference type="PIR" id="S25221">
    <property type="entry name" value="S16400"/>
</dbReference>
<dbReference type="RefSeq" id="WP_000597713.1">
    <property type="nucleotide sequence ID" value="NZ_WWEL01000003.1"/>
</dbReference>
<dbReference type="PDB" id="1PDK">
    <property type="method" value="X-ray"/>
    <property type="resolution" value="2.40 A"/>
    <property type="chains" value="B=22-178"/>
</dbReference>
<dbReference type="PDB" id="7LHG">
    <property type="method" value="EM"/>
    <property type="resolution" value="3.80 A"/>
    <property type="chains" value="K=1-178"/>
</dbReference>
<dbReference type="PDB" id="7LHH">
    <property type="method" value="EM"/>
    <property type="resolution" value="7.20 A"/>
    <property type="chains" value="K=1-178"/>
</dbReference>
<dbReference type="PDB" id="7LHI">
    <property type="method" value="EM"/>
    <property type="resolution" value="7.60 A"/>
    <property type="chains" value="K=1-178"/>
</dbReference>
<dbReference type="PDBsum" id="1PDK"/>
<dbReference type="PDBsum" id="7LHG"/>
<dbReference type="PDBsum" id="7LHH"/>
<dbReference type="PDBsum" id="7LHI"/>
<dbReference type="EMDB" id="EMD-23339"/>
<dbReference type="EMDB" id="EMD-23340"/>
<dbReference type="EMDB" id="EMD-23341"/>
<dbReference type="SMR" id="P62532"/>
<dbReference type="DIP" id="DIP-60778N"/>
<dbReference type="IntAct" id="P62532">
    <property type="interactions" value="3"/>
</dbReference>
<dbReference type="EvolutionaryTrace" id="P62532"/>
<dbReference type="GO" id="GO:0005576">
    <property type="term" value="C:extracellular region"/>
    <property type="evidence" value="ECO:0007669"/>
    <property type="project" value="UniProtKB-SubCell"/>
</dbReference>
<dbReference type="GO" id="GO:0009289">
    <property type="term" value="C:pilus"/>
    <property type="evidence" value="ECO:0007669"/>
    <property type="project" value="UniProtKB-SubCell"/>
</dbReference>
<dbReference type="GO" id="GO:0043709">
    <property type="term" value="P:cell adhesion involved in single-species biofilm formation"/>
    <property type="evidence" value="ECO:0007669"/>
    <property type="project" value="TreeGrafter"/>
</dbReference>
<dbReference type="Gene3D" id="2.60.40.1090">
    <property type="entry name" value="Fimbrial-type adhesion domain"/>
    <property type="match status" value="1"/>
</dbReference>
<dbReference type="InterPro" id="IPR000259">
    <property type="entry name" value="Adhesion_dom_fimbrial"/>
</dbReference>
<dbReference type="InterPro" id="IPR036937">
    <property type="entry name" value="Adhesion_dom_fimbrial_sf"/>
</dbReference>
<dbReference type="InterPro" id="IPR008966">
    <property type="entry name" value="Adhesion_dom_sf"/>
</dbReference>
<dbReference type="InterPro" id="IPR050263">
    <property type="entry name" value="Bact_Fimbrial_Adh_Pro"/>
</dbReference>
<dbReference type="PANTHER" id="PTHR33420:SF26">
    <property type="entry name" value="FIMBRIAL SUBUNIT"/>
    <property type="match status" value="1"/>
</dbReference>
<dbReference type="PANTHER" id="PTHR33420">
    <property type="entry name" value="FIMBRIAL SUBUNIT ELFA-RELATED"/>
    <property type="match status" value="1"/>
</dbReference>
<dbReference type="Pfam" id="PF00419">
    <property type="entry name" value="Fimbrial"/>
    <property type="match status" value="1"/>
</dbReference>
<dbReference type="SUPFAM" id="SSF49401">
    <property type="entry name" value="Bacterial adhesins"/>
    <property type="match status" value="1"/>
</dbReference>
<name>PAPK_ECOLX</name>
<evidence type="ECO:0000255" key="1"/>
<evidence type="ECO:0000269" key="2">
    <source>
    </source>
</evidence>
<evidence type="ECO:0007829" key="3">
    <source>
        <dbReference type="PDB" id="1PDK"/>
    </source>
</evidence>
<comment type="function">
    <text evidence="2">Adapter that links the pilus rod to the base of the tip fibrillum. Regulates the length of the tip fibrillum and joins it to the pilus rod. Pili are polar filaments radiating from the surface of the bacterium to a length of 0.5-1.5 micrometers and numbering 100-300 per cell, and enable bacteria to colonize the epithelium of specific host organs.</text>
</comment>
<comment type="subcellular location">
    <subcellularLocation>
        <location>Secreted</location>
    </subcellularLocation>
    <subcellularLocation>
        <location>Fimbrium</location>
    </subcellularLocation>
</comment>
<comment type="miscellaneous">
    <text>Strains of E.coli that cause infection of the human urinary tract produce pap-pili which are hair-like appendages consisting of about 1000 helically arranged subunits of the protein PapA. These pili mediate binding to digalactoside-containing glycolipids present on the epithelial cells which line the urinary tract.</text>
</comment>
<sequence length="178" mass="18872">MIKSTGALLLFAALSAGQAIASDVAFRGNLLDRPCHVSGDSLNKHVVFKTRASRDFWYPPGRSPTESFVIRLENCHATAVGKIVTLTFKGTEEAALPGHLKVTGVNAGRLGIALLDTDGSSLLKPGTSHNKGQGEKVTGNSLELPFGAYVVATPEALRTKSVVPGDYEATATFELTYR</sequence>
<keyword id="KW-0002">3D-structure</keyword>
<keyword id="KW-0281">Fimbrium</keyword>
<keyword id="KW-0964">Secreted</keyword>
<keyword id="KW-0732">Signal</keyword>
<protein>
    <recommendedName>
        <fullName>Fimbrial adapter PapK</fullName>
    </recommendedName>
</protein>
<proteinExistence type="evidence at protein level"/>
<feature type="signal peptide" evidence="1">
    <location>
        <begin position="1"/>
        <end position="21"/>
    </location>
</feature>
<feature type="chain" id="PRO_0000022008" description="Fimbrial adapter PapK">
    <location>
        <begin position="22"/>
        <end position="178"/>
    </location>
</feature>
<feature type="strand" evidence="3">
    <location>
        <begin position="45"/>
        <end position="47"/>
    </location>
</feature>
<feature type="helix" evidence="3">
    <location>
        <begin position="52"/>
        <end position="56"/>
    </location>
</feature>
<feature type="strand" evidence="3">
    <location>
        <begin position="66"/>
        <end position="74"/>
    </location>
</feature>
<feature type="turn" evidence="3">
    <location>
        <begin position="77"/>
        <end position="79"/>
    </location>
</feature>
<feature type="helix" evidence="3">
    <location>
        <begin position="80"/>
        <end position="83"/>
    </location>
</feature>
<feature type="strand" evidence="3">
    <location>
        <begin position="84"/>
        <end position="89"/>
    </location>
</feature>
<feature type="strand" evidence="3">
    <location>
        <begin position="96"/>
        <end position="100"/>
    </location>
</feature>
<feature type="strand" evidence="3">
    <location>
        <begin position="110"/>
        <end position="115"/>
    </location>
</feature>
<feature type="strand" evidence="3">
    <location>
        <begin position="119"/>
        <end position="122"/>
    </location>
</feature>
<feature type="strand" evidence="3">
    <location>
        <begin position="141"/>
        <end position="152"/>
    </location>
</feature>
<feature type="helix" evidence="3">
    <location>
        <begin position="154"/>
        <end position="158"/>
    </location>
</feature>
<feature type="strand" evidence="3">
    <location>
        <begin position="168"/>
        <end position="177"/>
    </location>
</feature>